<feature type="signal peptide" evidence="1">
    <location>
        <begin position="1"/>
        <end position="18"/>
    </location>
</feature>
<feature type="chain" id="PRO_0000424949" description="Predicted GPI-anchored protein 37">
    <location>
        <begin position="19"/>
        <end position="185"/>
    </location>
</feature>
<feature type="propeptide" id="PRO_0000424950" description="Removed in mature form" evidence="1">
    <location>
        <begin position="186"/>
        <end position="208"/>
    </location>
</feature>
<feature type="region of interest" description="Disordered" evidence="2">
    <location>
        <begin position="33"/>
        <end position="93"/>
    </location>
</feature>
<feature type="compositionally biased region" description="Gly residues" evidence="2">
    <location>
        <begin position="36"/>
        <end position="53"/>
    </location>
</feature>
<feature type="compositionally biased region" description="Low complexity" evidence="2">
    <location>
        <begin position="54"/>
        <end position="63"/>
    </location>
</feature>
<feature type="lipid moiety-binding region" description="GPI-anchor amidated serine" evidence="1">
    <location>
        <position position="185"/>
    </location>
</feature>
<feature type="glycosylation site" description="N-linked (GlcNAc...) asparagine" evidence="1">
    <location>
        <position position="173"/>
    </location>
</feature>
<gene>
    <name type="primary">PGA37</name>
    <name type="ordered locus">CAALFM_C504370CA</name>
    <name type="ORF">CaO19.11405</name>
    <name type="ORF">CaO19.3923</name>
</gene>
<name>PGA37_CANAL</name>
<keyword id="KW-1003">Cell membrane</keyword>
<keyword id="KW-0325">Glycoprotein</keyword>
<keyword id="KW-0336">GPI-anchor</keyword>
<keyword id="KW-0449">Lipoprotein</keyword>
<keyword id="KW-0472">Membrane</keyword>
<keyword id="KW-1185">Reference proteome</keyword>
<keyword id="KW-0732">Signal</keyword>
<reference key="1">
    <citation type="journal article" date="2004" name="Proc. Natl. Acad. Sci. U.S.A.">
        <title>The diploid genome sequence of Candida albicans.</title>
        <authorList>
            <person name="Jones T."/>
            <person name="Federspiel N.A."/>
            <person name="Chibana H."/>
            <person name="Dungan J."/>
            <person name="Kalman S."/>
            <person name="Magee B.B."/>
            <person name="Newport G."/>
            <person name="Thorstenson Y.R."/>
            <person name="Agabian N."/>
            <person name="Magee P.T."/>
            <person name="Davis R.W."/>
            <person name="Scherer S."/>
        </authorList>
    </citation>
    <scope>NUCLEOTIDE SEQUENCE [LARGE SCALE GENOMIC DNA]</scope>
    <source>
        <strain>SC5314 / ATCC MYA-2876</strain>
    </source>
</reference>
<reference key="2">
    <citation type="journal article" date="2007" name="Genome Biol.">
        <title>Assembly of the Candida albicans genome into sixteen supercontigs aligned on the eight chromosomes.</title>
        <authorList>
            <person name="van het Hoog M."/>
            <person name="Rast T.J."/>
            <person name="Martchenko M."/>
            <person name="Grindle S."/>
            <person name="Dignard D."/>
            <person name="Hogues H."/>
            <person name="Cuomo C."/>
            <person name="Berriman M."/>
            <person name="Scherer S."/>
            <person name="Magee B.B."/>
            <person name="Whiteway M."/>
            <person name="Chibana H."/>
            <person name="Nantel A."/>
            <person name="Magee P.T."/>
        </authorList>
    </citation>
    <scope>GENOME REANNOTATION</scope>
    <source>
        <strain>SC5314 / ATCC MYA-2876</strain>
    </source>
</reference>
<reference key="3">
    <citation type="journal article" date="2013" name="Genome Biol.">
        <title>Assembly of a phased diploid Candida albicans genome facilitates allele-specific measurements and provides a simple model for repeat and indel structure.</title>
        <authorList>
            <person name="Muzzey D."/>
            <person name="Schwartz K."/>
            <person name="Weissman J.S."/>
            <person name="Sherlock G."/>
        </authorList>
    </citation>
    <scope>NUCLEOTIDE SEQUENCE [LARGE SCALE GENOMIC DNA]</scope>
    <scope>GENOME REANNOTATION</scope>
    <source>
        <strain>SC5314 / ATCC MYA-2876</strain>
    </source>
</reference>
<reference key="4">
    <citation type="journal article" date="2003" name="Yeast">
        <title>Genome-wide identification of fungal GPI proteins.</title>
        <authorList>
            <person name="De Groot P.W."/>
            <person name="Hellingwerf K.J."/>
            <person name="Klis F.M."/>
        </authorList>
    </citation>
    <scope>PREDICTION OF GPI-ANCHOR</scope>
</reference>
<reference key="5">
    <citation type="journal article" date="2009" name="Curr. Biol.">
        <title>Specialized sugar sensing in diverse fungi.</title>
        <authorList>
            <person name="Brown V."/>
            <person name="Sabina J."/>
            <person name="Johnston M."/>
        </authorList>
    </citation>
    <scope>INDUCTION</scope>
</reference>
<reference key="6">
    <citation type="journal article" date="2011" name="J. Biol. Chem.">
        <title>Cap2-HAP complex is a critical transcriptional regulator that has dual but contrasting roles in regulation of iron homeostasis in Candida albicans.</title>
        <authorList>
            <person name="Singh R.P."/>
            <person name="Prasad H.K."/>
            <person name="Sinha I."/>
            <person name="Agarwal N."/>
            <person name="Natarajan K."/>
        </authorList>
    </citation>
    <scope>INDUCTION</scope>
</reference>
<reference key="7">
    <citation type="journal article" date="2011" name="PLoS ONE">
        <title>From attachment to damage: defined genes of Candida albicans mediate adhesion, invasion and damage during interaction with oral epithelial cells.</title>
        <authorList>
            <person name="Wachtler B."/>
            <person name="Wilson D."/>
            <person name="Haedicke K."/>
            <person name="Dalle F."/>
            <person name="Hube B."/>
        </authorList>
    </citation>
    <scope>INDUCTION</scope>
</reference>
<protein>
    <recommendedName>
        <fullName>Predicted GPI-anchored protein 37</fullName>
    </recommendedName>
</protein>
<sequence length="208" mass="20615">MLFTQLIILLTVTSQALSVTISDLNNIASNQVTKRLGGGSRGGSSSGSRGGSSSGSSSGSSSGSRGGSSSGSSSSGSRGGGSGSSSSSGSRNWGSNQYHCSGNSCGYGNYYAPSTAAAAVGYGTGRYTGGTQYGNNQYHCSGSTCGYGNYFAPSAAAAAAGYGSARYYAQHHNSTSSESETISGSSSLNIPSTHFYLIGFAAAYSIVL</sequence>
<proteinExistence type="evidence at protein level"/>
<organism>
    <name type="scientific">Candida albicans (strain SC5314 / ATCC MYA-2876)</name>
    <name type="common">Yeast</name>
    <dbReference type="NCBI Taxonomy" id="237561"/>
    <lineage>
        <taxon>Eukaryota</taxon>
        <taxon>Fungi</taxon>
        <taxon>Dikarya</taxon>
        <taxon>Ascomycota</taxon>
        <taxon>Saccharomycotina</taxon>
        <taxon>Pichiomycetes</taxon>
        <taxon>Debaryomycetaceae</taxon>
        <taxon>Candida/Lodderomyces clade</taxon>
        <taxon>Candida</taxon>
    </lineage>
</organism>
<dbReference type="EMBL" id="CP017627">
    <property type="protein sequence ID" value="AOW29845.1"/>
    <property type="molecule type" value="Genomic_DNA"/>
</dbReference>
<dbReference type="RefSeq" id="XP_721833.1">
    <property type="nucleotide sequence ID" value="XM_716740.1"/>
</dbReference>
<dbReference type="STRING" id="237561.Q5AK97"/>
<dbReference type="GlyCosmos" id="Q5AK97">
    <property type="glycosylation" value="1 site, No reported glycans"/>
</dbReference>
<dbReference type="EnsemblFungi" id="C5_04370C_A-T">
    <property type="protein sequence ID" value="C5_04370C_A-T-p1"/>
    <property type="gene ID" value="C5_04370C_A"/>
</dbReference>
<dbReference type="GeneID" id="3636484"/>
<dbReference type="KEGG" id="cal:CAALFM_C504370CA"/>
<dbReference type="CGD" id="CAL0000201918">
    <property type="gene designation" value="PGA37"/>
</dbReference>
<dbReference type="VEuPathDB" id="FungiDB:C5_04370C_A"/>
<dbReference type="HOGENOM" id="CLU_114600_0_0_1"/>
<dbReference type="InParanoid" id="Q5AK97"/>
<dbReference type="OrthoDB" id="10543007at2759"/>
<dbReference type="PRO" id="PR:Q5AK97"/>
<dbReference type="Proteomes" id="UP000000559">
    <property type="component" value="Chromosome 5"/>
</dbReference>
<dbReference type="GO" id="GO:0005886">
    <property type="term" value="C:plasma membrane"/>
    <property type="evidence" value="ECO:0007669"/>
    <property type="project" value="UniProtKB-SubCell"/>
</dbReference>
<dbReference type="GO" id="GO:0098552">
    <property type="term" value="C:side of membrane"/>
    <property type="evidence" value="ECO:0007669"/>
    <property type="project" value="UniProtKB-KW"/>
</dbReference>
<accession>Q5AK97</accession>
<accession>A0A1D8PNZ0</accession>
<accession>Q5AKR0</accession>
<comment type="function">
    <text>Predicted GPI-anchored protein which may have a role during host infection.</text>
</comment>
<comment type="subcellular location">
    <subcellularLocation>
        <location evidence="6">Cell membrane</location>
        <topology evidence="6">Lipid-anchor</topology>
        <topology evidence="6">GPI-anchor</topology>
    </subcellularLocation>
</comment>
<comment type="induction">
    <text evidence="3 4 5">Repressed by HAP43. Down-regulated during oral epithelial infection. Up-regulated in response to galactose.</text>
</comment>
<comment type="similarity">
    <text evidence="6">Belongs to the PGA37 family.</text>
</comment>
<evidence type="ECO:0000255" key="1"/>
<evidence type="ECO:0000256" key="2">
    <source>
        <dbReference type="SAM" id="MobiDB-lite"/>
    </source>
</evidence>
<evidence type="ECO:0000269" key="3">
    <source>
    </source>
</evidence>
<evidence type="ECO:0000269" key="4">
    <source>
    </source>
</evidence>
<evidence type="ECO:0000269" key="5">
    <source>
    </source>
</evidence>
<evidence type="ECO:0000305" key="6"/>